<keyword id="KW-0028">Amino-acid biosynthesis</keyword>
<keyword id="KW-0057">Aromatic amino acid biosynthesis</keyword>
<keyword id="KW-0413">Isomerase</keyword>
<keyword id="KW-0822">Tryptophan biosynthesis</keyword>
<dbReference type="EC" id="5.3.1.24" evidence="1"/>
<dbReference type="EMBL" id="AP009324">
    <property type="protein sequence ID" value="BAF78242.1"/>
    <property type="molecule type" value="Genomic_DNA"/>
</dbReference>
<dbReference type="RefSeq" id="WP_000768192.1">
    <property type="nucleotide sequence ID" value="NZ_CTYB01000014.1"/>
</dbReference>
<dbReference type="SMR" id="A7X235"/>
<dbReference type="KEGG" id="saw:SAHV_1359"/>
<dbReference type="HOGENOM" id="CLU_076364_1_1_9"/>
<dbReference type="UniPathway" id="UPA00035">
    <property type="reaction ID" value="UER00042"/>
</dbReference>
<dbReference type="GO" id="GO:0004640">
    <property type="term" value="F:phosphoribosylanthranilate isomerase activity"/>
    <property type="evidence" value="ECO:0007669"/>
    <property type="project" value="UniProtKB-UniRule"/>
</dbReference>
<dbReference type="GO" id="GO:0000162">
    <property type="term" value="P:L-tryptophan biosynthetic process"/>
    <property type="evidence" value="ECO:0007669"/>
    <property type="project" value="UniProtKB-UniRule"/>
</dbReference>
<dbReference type="CDD" id="cd00405">
    <property type="entry name" value="PRAI"/>
    <property type="match status" value="1"/>
</dbReference>
<dbReference type="FunFam" id="3.20.20.70:FF:000277">
    <property type="entry name" value="Phosphoribosylanthranilate isomerase"/>
    <property type="match status" value="1"/>
</dbReference>
<dbReference type="Gene3D" id="3.20.20.70">
    <property type="entry name" value="Aldolase class I"/>
    <property type="match status" value="1"/>
</dbReference>
<dbReference type="HAMAP" id="MF_00135">
    <property type="entry name" value="PRAI"/>
    <property type="match status" value="1"/>
</dbReference>
<dbReference type="InterPro" id="IPR013785">
    <property type="entry name" value="Aldolase_TIM"/>
</dbReference>
<dbReference type="InterPro" id="IPR001240">
    <property type="entry name" value="PRAI_dom"/>
</dbReference>
<dbReference type="InterPro" id="IPR011060">
    <property type="entry name" value="RibuloseP-bd_barrel"/>
</dbReference>
<dbReference type="InterPro" id="IPR044643">
    <property type="entry name" value="TrpF_fam"/>
</dbReference>
<dbReference type="NCBIfam" id="NF010563">
    <property type="entry name" value="PRK13958.1"/>
    <property type="match status" value="1"/>
</dbReference>
<dbReference type="PANTHER" id="PTHR42894">
    <property type="entry name" value="N-(5'-PHOSPHORIBOSYL)ANTHRANILATE ISOMERASE"/>
    <property type="match status" value="1"/>
</dbReference>
<dbReference type="PANTHER" id="PTHR42894:SF1">
    <property type="entry name" value="N-(5'-PHOSPHORIBOSYL)ANTHRANILATE ISOMERASE"/>
    <property type="match status" value="1"/>
</dbReference>
<dbReference type="Pfam" id="PF00697">
    <property type="entry name" value="PRAI"/>
    <property type="match status" value="1"/>
</dbReference>
<dbReference type="SUPFAM" id="SSF51366">
    <property type="entry name" value="Ribulose-phoshate binding barrel"/>
    <property type="match status" value="1"/>
</dbReference>
<feature type="chain" id="PRO_1000197120" description="N-(5'-phosphoribosyl)anthranilate isomerase">
    <location>
        <begin position="1"/>
        <end position="210"/>
    </location>
</feature>
<proteinExistence type="inferred from homology"/>
<accession>A7X235</accession>
<comment type="catalytic activity">
    <reaction evidence="1">
        <text>N-(5-phospho-beta-D-ribosyl)anthranilate = 1-(2-carboxyphenylamino)-1-deoxy-D-ribulose 5-phosphate</text>
        <dbReference type="Rhea" id="RHEA:21540"/>
        <dbReference type="ChEBI" id="CHEBI:18277"/>
        <dbReference type="ChEBI" id="CHEBI:58613"/>
        <dbReference type="EC" id="5.3.1.24"/>
    </reaction>
</comment>
<comment type="pathway">
    <text evidence="1">Amino-acid biosynthesis; L-tryptophan biosynthesis; L-tryptophan from chorismate: step 3/5.</text>
</comment>
<comment type="similarity">
    <text evidence="1">Belongs to the TrpF family.</text>
</comment>
<reference key="1">
    <citation type="journal article" date="2008" name="Antimicrob. Agents Chemother.">
        <title>Mutated response regulator graR is responsible for phenotypic conversion of Staphylococcus aureus from heterogeneous vancomycin-intermediate resistance to vancomycin-intermediate resistance.</title>
        <authorList>
            <person name="Neoh H.-M."/>
            <person name="Cui L."/>
            <person name="Yuzawa H."/>
            <person name="Takeuchi F."/>
            <person name="Matsuo M."/>
            <person name="Hiramatsu K."/>
        </authorList>
    </citation>
    <scope>NUCLEOTIDE SEQUENCE [LARGE SCALE GENOMIC DNA]</scope>
    <source>
        <strain>Mu3 / ATCC 700698</strain>
    </source>
</reference>
<sequence length="210" mass="23389">MKLKFCGFTSIKDVTAASQLPIDAIGFIHYEKSKRHQTITQIKKLASAVPNHIDKVCVMVNPDLTTIEHVLSNTSINTIQLHGTESIDFIQEIKKKYSSIKITKALAADENIIQNINKYKGFVDLFIIDTPSVSYGGTGQTYDWTILKHIKDIPYLIAGGINSENIQTVNQLKLSHQGYDLASGIEVNGRKDIEKMTAIVNIVKGDRDNE</sequence>
<evidence type="ECO:0000255" key="1">
    <source>
        <dbReference type="HAMAP-Rule" id="MF_00135"/>
    </source>
</evidence>
<name>TRPF_STAA1</name>
<protein>
    <recommendedName>
        <fullName evidence="1">N-(5'-phosphoribosyl)anthranilate isomerase</fullName>
        <shortName evidence="1">PRAI</shortName>
        <ecNumber evidence="1">5.3.1.24</ecNumber>
    </recommendedName>
</protein>
<gene>
    <name evidence="1" type="primary">trpF</name>
    <name type="ordered locus">SAHV_1359</name>
</gene>
<organism>
    <name type="scientific">Staphylococcus aureus (strain Mu3 / ATCC 700698)</name>
    <dbReference type="NCBI Taxonomy" id="418127"/>
    <lineage>
        <taxon>Bacteria</taxon>
        <taxon>Bacillati</taxon>
        <taxon>Bacillota</taxon>
        <taxon>Bacilli</taxon>
        <taxon>Bacillales</taxon>
        <taxon>Staphylococcaceae</taxon>
        <taxon>Staphylococcus</taxon>
    </lineage>
</organism>